<name>RCN2V_CROAD</name>
<protein>
    <recommendedName>
        <fullName>Reticulocalbin-2</fullName>
    </recommendedName>
    <alternativeName>
        <fullName>Taipoxin-associated calcium-binding protein 49 homolog</fullName>
    </alternativeName>
</protein>
<proteinExistence type="evidence at protein level"/>
<evidence type="ECO:0000255" key="1"/>
<evidence type="ECO:0000255" key="2">
    <source>
        <dbReference type="PROSITE-ProRule" id="PRU00448"/>
    </source>
</evidence>
<evidence type="ECO:0000269" key="3">
    <source>
    </source>
</evidence>
<evidence type="ECO:0000305" key="4"/>
<accession>J3S9D9</accession>
<sequence>MESPTLLGLLLLLLGGPGTSLGEHRPDYDKEALLGGQDEVEEFSKLSPEEQQKRLKVIISRIDVDLDGFLTEAELSSWIQHSFKSYIIEDAKQQFQHYDKDGDGRVSWEEYNIQMYDRVIDFEEDTTLDDAEEESFRQLHLKDKKRFQKANKDGDSHLDFEEFAAFEHPEEADYMKEFVIQESLEEHDKDGDGFVSLQEFLGDYRRDPAAKEDPEWIVVEEDRFKNDYDKDKDGKLSPKELLTWVMPNNEGLAQEEAVHLLDEMDLDGDRRLSANEILENQDLFLNSEATDYGRQLHDKSFYHEEL</sequence>
<keyword id="KW-0106">Calcium</keyword>
<keyword id="KW-0479">Metal-binding</keyword>
<keyword id="KW-0677">Repeat</keyword>
<keyword id="KW-0964">Secreted</keyword>
<keyword id="KW-0732">Signal</keyword>
<dbReference type="EMBL" id="JU175619">
    <property type="protein sequence ID" value="AFJ51143.1"/>
    <property type="molecule type" value="mRNA"/>
</dbReference>
<dbReference type="GO" id="GO:0005783">
    <property type="term" value="C:endoplasmic reticulum"/>
    <property type="evidence" value="ECO:0007669"/>
    <property type="project" value="TreeGrafter"/>
</dbReference>
<dbReference type="GO" id="GO:0005576">
    <property type="term" value="C:extracellular region"/>
    <property type="evidence" value="ECO:0007669"/>
    <property type="project" value="UniProtKB-SubCell"/>
</dbReference>
<dbReference type="GO" id="GO:0005509">
    <property type="term" value="F:calcium ion binding"/>
    <property type="evidence" value="ECO:0007669"/>
    <property type="project" value="InterPro"/>
</dbReference>
<dbReference type="CDD" id="cd16224">
    <property type="entry name" value="EFh_CREC_RCN2"/>
    <property type="match status" value="1"/>
</dbReference>
<dbReference type="FunFam" id="1.10.238.10:FF:000125">
    <property type="entry name" value="Reticulocalbin 2"/>
    <property type="match status" value="1"/>
</dbReference>
<dbReference type="FunFam" id="1.10.238.10:FF:000170">
    <property type="entry name" value="reticulocalbin-2 isoform X1"/>
    <property type="match status" value="1"/>
</dbReference>
<dbReference type="FunFam" id="1.10.238.10:FF:000176">
    <property type="entry name" value="reticulocalbin-2 isoform X2"/>
    <property type="match status" value="1"/>
</dbReference>
<dbReference type="Gene3D" id="1.10.238.10">
    <property type="entry name" value="EF-hand"/>
    <property type="match status" value="3"/>
</dbReference>
<dbReference type="InterPro" id="IPR011992">
    <property type="entry name" value="EF-hand-dom_pair"/>
</dbReference>
<dbReference type="InterPro" id="IPR018247">
    <property type="entry name" value="EF_Hand_1_Ca_BS"/>
</dbReference>
<dbReference type="InterPro" id="IPR002048">
    <property type="entry name" value="EF_hand_dom"/>
</dbReference>
<dbReference type="PANTHER" id="PTHR10827">
    <property type="entry name" value="RETICULOCALBIN"/>
    <property type="match status" value="1"/>
</dbReference>
<dbReference type="PANTHER" id="PTHR10827:SF78">
    <property type="entry name" value="RETICULOCALBIN-2"/>
    <property type="match status" value="1"/>
</dbReference>
<dbReference type="Pfam" id="PF13202">
    <property type="entry name" value="EF-hand_5"/>
    <property type="match status" value="2"/>
</dbReference>
<dbReference type="Pfam" id="PF13499">
    <property type="entry name" value="EF-hand_7"/>
    <property type="match status" value="1"/>
</dbReference>
<dbReference type="SMART" id="SM00054">
    <property type="entry name" value="EFh"/>
    <property type="match status" value="4"/>
</dbReference>
<dbReference type="SUPFAM" id="SSF47473">
    <property type="entry name" value="EF-hand"/>
    <property type="match status" value="2"/>
</dbReference>
<dbReference type="PROSITE" id="PS00018">
    <property type="entry name" value="EF_HAND_1"/>
    <property type="match status" value="4"/>
</dbReference>
<dbReference type="PROSITE" id="PS50222">
    <property type="entry name" value="EF_HAND_2"/>
    <property type="match status" value="6"/>
</dbReference>
<comment type="subunit">
    <text evidence="3">May bind phospholipase A2, since the rat reticulocalbin-2 has been isolated on the phospholipase complex taipoxin columns.</text>
</comment>
<comment type="subcellular location">
    <subcellularLocation>
        <location>Secreted</location>
    </subcellularLocation>
</comment>
<comment type="tissue specificity">
    <text>Expressed by the venom gland.</text>
</comment>
<comment type="similarity">
    <text evidence="4">Belongs to the CREC family.</text>
</comment>
<feature type="signal peptide" evidence="1">
    <location>
        <begin position="1"/>
        <end position="22"/>
    </location>
</feature>
<feature type="chain" id="PRO_0000425659" description="Reticulocalbin-2">
    <location>
        <begin position="23"/>
        <end position="306"/>
    </location>
</feature>
<feature type="domain" description="EF-hand 1" evidence="2">
    <location>
        <begin position="50"/>
        <end position="85"/>
    </location>
</feature>
<feature type="domain" description="EF-hand 2" evidence="2">
    <location>
        <begin position="86"/>
        <end position="121"/>
    </location>
</feature>
<feature type="domain" description="EF-hand 3" evidence="2">
    <location>
        <begin position="144"/>
        <end position="173"/>
    </location>
</feature>
<feature type="domain" description="EF-hand 4" evidence="2">
    <location>
        <begin position="175"/>
        <end position="210"/>
    </location>
</feature>
<feature type="domain" description="EF-hand 5" evidence="2">
    <location>
        <begin position="226"/>
        <end position="251"/>
    </location>
</feature>
<feature type="domain" description="EF-hand 6" evidence="2">
    <location>
        <begin position="252"/>
        <end position="287"/>
    </location>
</feature>
<feature type="binding site" evidence="2">
    <location>
        <position position="99"/>
    </location>
    <ligand>
        <name>Ca(2+)</name>
        <dbReference type="ChEBI" id="CHEBI:29108"/>
        <label>1</label>
    </ligand>
</feature>
<feature type="binding site" evidence="2">
    <location>
        <position position="101"/>
    </location>
    <ligand>
        <name>Ca(2+)</name>
        <dbReference type="ChEBI" id="CHEBI:29108"/>
        <label>1</label>
    </ligand>
</feature>
<feature type="binding site" evidence="2">
    <location>
        <position position="103"/>
    </location>
    <ligand>
        <name>Ca(2+)</name>
        <dbReference type="ChEBI" id="CHEBI:29108"/>
        <label>1</label>
    </ligand>
</feature>
<feature type="binding site" evidence="2">
    <location>
        <position position="105"/>
    </location>
    <ligand>
        <name>Ca(2+)</name>
        <dbReference type="ChEBI" id="CHEBI:29108"/>
        <label>1</label>
    </ligand>
</feature>
<feature type="binding site" evidence="2">
    <location>
        <position position="110"/>
    </location>
    <ligand>
        <name>Ca(2+)</name>
        <dbReference type="ChEBI" id="CHEBI:29108"/>
        <label>1</label>
    </ligand>
</feature>
<feature type="binding site" evidence="2">
    <location>
        <position position="188"/>
    </location>
    <ligand>
        <name>Ca(2+)</name>
        <dbReference type="ChEBI" id="CHEBI:29108"/>
        <label>2</label>
    </ligand>
</feature>
<feature type="binding site" evidence="2">
    <location>
        <position position="190"/>
    </location>
    <ligand>
        <name>Ca(2+)</name>
        <dbReference type="ChEBI" id="CHEBI:29108"/>
        <label>2</label>
    </ligand>
</feature>
<feature type="binding site" evidence="2">
    <location>
        <position position="192"/>
    </location>
    <ligand>
        <name>Ca(2+)</name>
        <dbReference type="ChEBI" id="CHEBI:29108"/>
        <label>2</label>
    </ligand>
</feature>
<feature type="binding site" evidence="2">
    <location>
        <position position="199"/>
    </location>
    <ligand>
        <name>Ca(2+)</name>
        <dbReference type="ChEBI" id="CHEBI:29108"/>
        <label>2</label>
    </ligand>
</feature>
<feature type="binding site" evidence="2">
    <location>
        <position position="229"/>
    </location>
    <ligand>
        <name>Ca(2+)</name>
        <dbReference type="ChEBI" id="CHEBI:29108"/>
        <label>3</label>
    </ligand>
</feature>
<feature type="binding site" evidence="2">
    <location>
        <position position="231"/>
    </location>
    <ligand>
        <name>Ca(2+)</name>
        <dbReference type="ChEBI" id="CHEBI:29108"/>
        <label>3</label>
    </ligand>
</feature>
<feature type="binding site" evidence="2">
    <location>
        <position position="233"/>
    </location>
    <ligand>
        <name>Ca(2+)</name>
        <dbReference type="ChEBI" id="CHEBI:29108"/>
        <label>3</label>
    </ligand>
</feature>
<feature type="binding site" evidence="2">
    <location>
        <position position="235"/>
    </location>
    <ligand>
        <name>Ca(2+)</name>
        <dbReference type="ChEBI" id="CHEBI:29108"/>
        <label>3</label>
    </ligand>
</feature>
<feature type="binding site" evidence="2">
    <location>
        <position position="240"/>
    </location>
    <ligand>
        <name>Ca(2+)</name>
        <dbReference type="ChEBI" id="CHEBI:29108"/>
        <label>3</label>
    </ligand>
</feature>
<feature type="binding site" evidence="2">
    <location>
        <position position="265"/>
    </location>
    <ligand>
        <name>Ca(2+)</name>
        <dbReference type="ChEBI" id="CHEBI:29108"/>
        <label>4</label>
    </ligand>
</feature>
<feature type="binding site" evidence="2">
    <location>
        <position position="267"/>
    </location>
    <ligand>
        <name>Ca(2+)</name>
        <dbReference type="ChEBI" id="CHEBI:29108"/>
        <label>4</label>
    </ligand>
</feature>
<feature type="binding site" evidence="2">
    <location>
        <position position="269"/>
    </location>
    <ligand>
        <name>Ca(2+)</name>
        <dbReference type="ChEBI" id="CHEBI:29108"/>
        <label>4</label>
    </ligand>
</feature>
<feature type="binding site" evidence="2">
    <location>
        <position position="271"/>
    </location>
    <ligand>
        <name>Ca(2+)</name>
        <dbReference type="ChEBI" id="CHEBI:29108"/>
        <label>4</label>
    </ligand>
</feature>
<feature type="binding site" evidence="2">
    <location>
        <position position="276"/>
    </location>
    <ligand>
        <name>Ca(2+)</name>
        <dbReference type="ChEBI" id="CHEBI:29108"/>
        <label>4</label>
    </ligand>
</feature>
<organism>
    <name type="scientific">Crotalus adamanteus</name>
    <name type="common">Eastern diamondback rattlesnake</name>
    <dbReference type="NCBI Taxonomy" id="8729"/>
    <lineage>
        <taxon>Eukaryota</taxon>
        <taxon>Metazoa</taxon>
        <taxon>Chordata</taxon>
        <taxon>Craniata</taxon>
        <taxon>Vertebrata</taxon>
        <taxon>Euteleostomi</taxon>
        <taxon>Lepidosauria</taxon>
        <taxon>Squamata</taxon>
        <taxon>Bifurcata</taxon>
        <taxon>Unidentata</taxon>
        <taxon>Episquamata</taxon>
        <taxon>Toxicofera</taxon>
        <taxon>Serpentes</taxon>
        <taxon>Colubroidea</taxon>
        <taxon>Viperidae</taxon>
        <taxon>Crotalinae</taxon>
        <taxon>Crotalus</taxon>
    </lineage>
</organism>
<reference key="1">
    <citation type="journal article" date="2012" name="BMC Genomics">
        <title>The venom-gland transcriptome of the eastern diamondback rattlesnake (Crotalus adamanteus).</title>
        <authorList>
            <person name="Rokyta D.R."/>
            <person name="Lemmon A.R."/>
            <person name="Margres M.J."/>
            <person name="Aronow K."/>
        </authorList>
    </citation>
    <scope>NUCLEOTIDE SEQUENCE [MRNA]</scope>
    <source>
        <tissue>Venom gland</tissue>
    </source>
</reference>
<reference key="2">
    <citation type="journal article" date="2014" name="J. Proteomics">
        <title>Linking the transcriptome and proteome to characterize the venom of the eastern diamondback rattlesnake (Crotalus adamanteus).</title>
        <authorList>
            <person name="Margres M.J."/>
            <person name="McGivern J.J."/>
            <person name="Wray K.P."/>
            <person name="Seavy M."/>
            <person name="Calvin K."/>
            <person name="Rokyta D.R."/>
        </authorList>
    </citation>
    <scope>IDENTIFICATION BY MASS SPECTROMETRY</scope>
    <source>
        <tissue>Venom</tissue>
    </source>
</reference>
<reference key="3">
    <citation type="journal article" date="1995" name="J. Neurochem.">
        <title>Novel reticular calcium binding protein is purified on taipoxin columns.</title>
        <authorList>
            <person name="Dodds D."/>
            <person name="Schlimgen A.K."/>
            <person name="Lu S.Y."/>
            <person name="Perin M.S."/>
        </authorList>
    </citation>
    <scope>PUTATIVE SUBUNIT</scope>
</reference>